<sequence>MTAGSVCVPQIIPLRVPQPGKANHEIDNNTLLEMKSDTPDVNIYYTLDGSKPEFLKRIGYGENNTFKYIKPITLPDGKIQVKAIAVSKDCRQSGIVTKVFHVDYEPPNIVSPEDNVENVLKDSSRQEFKNGFVGSKLKKKYKNSENQRSWNVNLRKFPESPLEIPAYGGGSGSRPPTRQSQSPGFAHVSGQKCLTSTEIMRIQRETDFLKCAHCLAPRPSDPFARFCQECGSPVPPIFGCRLPPPEGAQMGLCAECRSLVPMNTPICVVCEAPLALQLQPQASLHLKEKVICRACGTGNPAHLRYCVTCEGALPSSQESMCSGDKAPPPPTQKGGTISCYRCGRWNLWEASFCGWCGAMLGIPAGCSVCPKCGASNHLSARFCGSCGICVKSLVKLSLDRSLALAAEEPRPFSESLNIPLPRSDVGTKRDIGTQTVGLFYPSGKLLAKKEQELASQKQRQEKMSDHKPLLTAISPGRGYWRRQLDHISAHLRCYAQNNPEFRALIAEPRMGKLISATVHEDGCEVSIRLNYSQVSNKNLYLNKAVNFSDHLLSSAAEGDGGLCGSRSSWVSDYSQSTSDTIEKIKRIKNFKTKTFQEKKEQLIPENRLLLKEVGPTGEGRVSVIEQLLDEGADPNCCDEDNRPVITVAVMNKHHEAIPVLVQRGADIDQQWGPLRNTALHEATLLGLAGRESTATLLGCNASIQKKNAGGQTAYDLALNTGDDLVTSLFAAKFGQGLEDQLAQTRSLSLDDC</sequence>
<accession>Q9NVP4</accession>
<accession>A1L3Z8</accession>
<accession>B7ZLZ4</accession>
<accession>Q4F7X1</accession>
<accession>Q5QPD9</accession>
<accession>Q5QPE0</accession>
<accession>Q68DN8</accession>
<accession>Q6ZMX9</accession>
<accession>Q96NF0</accession>
<accession>Q9H1E0</accession>
<accession>Q9H442</accession>
<proteinExistence type="evidence at protein level"/>
<name>DZAN1_HUMAN</name>
<feature type="chain" id="PRO_0000066986" description="Double zinc ribbon and ankyrin repeat-containing protein 1">
    <location>
        <begin position="1"/>
        <end position="752"/>
    </location>
</feature>
<feature type="repeat" description="ANK 1" evidence="3">
    <location>
        <begin position="605"/>
        <end position="636"/>
    </location>
</feature>
<feature type="repeat" description="ANK 2" evidence="3">
    <location>
        <begin position="640"/>
        <end position="669"/>
    </location>
</feature>
<feature type="zinc finger region" description="DZANK-type 1">
    <location>
        <begin position="211"/>
        <end position="270"/>
    </location>
</feature>
<feature type="zinc finger region" description="DZANK-type 2">
    <location>
        <begin position="339"/>
        <end position="387"/>
    </location>
</feature>
<feature type="region of interest" description="Disordered" evidence="4">
    <location>
        <begin position="164"/>
        <end position="187"/>
    </location>
</feature>
<feature type="compositionally biased region" description="Polar residues" evidence="4">
    <location>
        <begin position="174"/>
        <end position="183"/>
    </location>
</feature>
<feature type="modified residue" description="Phosphoserine" evidence="2">
    <location>
        <position position="160"/>
    </location>
</feature>
<feature type="modified residue" description="Phosphoserine" evidence="11">
    <location>
        <position position="182"/>
    </location>
</feature>
<feature type="splice variant" id="VSP_042090" description="In isoform 2." evidence="6">
    <location>
        <begin position="1"/>
        <end position="173"/>
    </location>
</feature>
<feature type="splice variant" id="VSP_042091" description="In isoform 4." evidence="7">
    <location>
        <begin position="1"/>
        <end position="114"/>
    </location>
</feature>
<feature type="splice variant" id="VSP_042092" description="In isoform 4." evidence="7">
    <original>NVENVLKDSSRQEFKNGFVGSKLKKKYKNSENQRSWNVNLRKFPESPLEIPAYGGGSGSRPPTRQS</original>
    <variation>MLTLESFQRVHWKSQLMVEDQVLDHPPASPRQDTVPFTFKSFLFGHSMEIRPWKRKGRTLFRRLLF</variation>
    <location>
        <begin position="115"/>
        <end position="180"/>
    </location>
</feature>
<feature type="splice variant" id="VSP_042093" description="In isoform 2." evidence="6">
    <original>RPPTRQS</original>
    <variation>MLTLESF</variation>
    <location>
        <begin position="174"/>
        <end position="180"/>
    </location>
</feature>
<feature type="splice variant" id="VSP_042094" description="In isoform 5." evidence="8">
    <location>
        <begin position="319"/>
        <end position="359"/>
    </location>
</feature>
<feature type="splice variant" id="VSP_042095" description="In isoform 2." evidence="6">
    <original>E</original>
    <variation>EPRCAWQ</variation>
    <location>
        <position position="414"/>
    </location>
</feature>
<feature type="splice variant" id="VSP_042096" description="In isoform 3." evidence="6">
    <original>NLYLNKAVNFSDHLLSSAAEGDGGLCGSRSSWVSDYS</original>
    <variation>VRKLRLREVKQPASSKGTKLVSGRPRIHTWQPETFPS</variation>
    <location>
        <begin position="538"/>
        <end position="574"/>
    </location>
</feature>
<feature type="splice variant" id="VSP_042097" description="In isoform 3." evidence="6">
    <location>
        <begin position="575"/>
        <end position="752"/>
    </location>
</feature>
<feature type="sequence conflict" description="In Ref. 5; AAI30342." evidence="9" ref="5">
    <original>R</original>
    <variation>S</variation>
    <location>
        <position position="125"/>
    </location>
</feature>
<feature type="sequence conflict" description="In Ref. 1; BAB70949." evidence="9" ref="1">
    <original>A</original>
    <variation>V</variation>
    <location>
        <position position="272"/>
    </location>
</feature>
<feature type="sequence conflict" description="In Ref. 6; AAZ13595." evidence="9" ref="6">
    <original>I</original>
    <variation>L</variation>
    <location>
        <position position="603"/>
    </location>
</feature>
<reference key="1">
    <citation type="journal article" date="2004" name="Nat. Genet.">
        <title>Complete sequencing and characterization of 21,243 full-length human cDNAs.</title>
        <authorList>
            <person name="Ota T."/>
            <person name="Suzuki Y."/>
            <person name="Nishikawa T."/>
            <person name="Otsuki T."/>
            <person name="Sugiyama T."/>
            <person name="Irie R."/>
            <person name="Wakamatsu A."/>
            <person name="Hayashi K."/>
            <person name="Sato H."/>
            <person name="Nagai K."/>
            <person name="Kimura K."/>
            <person name="Makita H."/>
            <person name="Sekine M."/>
            <person name="Obayashi M."/>
            <person name="Nishi T."/>
            <person name="Shibahara T."/>
            <person name="Tanaka T."/>
            <person name="Ishii S."/>
            <person name="Yamamoto J."/>
            <person name="Saito K."/>
            <person name="Kawai Y."/>
            <person name="Isono Y."/>
            <person name="Nakamura Y."/>
            <person name="Nagahari K."/>
            <person name="Murakami K."/>
            <person name="Yasuda T."/>
            <person name="Iwayanagi T."/>
            <person name="Wagatsuma M."/>
            <person name="Shiratori A."/>
            <person name="Sudo H."/>
            <person name="Hosoiri T."/>
            <person name="Kaku Y."/>
            <person name="Kodaira H."/>
            <person name="Kondo H."/>
            <person name="Sugawara M."/>
            <person name="Takahashi M."/>
            <person name="Kanda K."/>
            <person name="Yokoi T."/>
            <person name="Furuya T."/>
            <person name="Kikkawa E."/>
            <person name="Omura Y."/>
            <person name="Abe K."/>
            <person name="Kamihara K."/>
            <person name="Katsuta N."/>
            <person name="Sato K."/>
            <person name="Tanikawa M."/>
            <person name="Yamazaki M."/>
            <person name="Ninomiya K."/>
            <person name="Ishibashi T."/>
            <person name="Yamashita H."/>
            <person name="Murakawa K."/>
            <person name="Fujimori K."/>
            <person name="Tanai H."/>
            <person name="Kimata M."/>
            <person name="Watanabe M."/>
            <person name="Hiraoka S."/>
            <person name="Chiba Y."/>
            <person name="Ishida S."/>
            <person name="Ono Y."/>
            <person name="Takiguchi S."/>
            <person name="Watanabe S."/>
            <person name="Yosida M."/>
            <person name="Hotuta T."/>
            <person name="Kusano J."/>
            <person name="Kanehori K."/>
            <person name="Takahashi-Fujii A."/>
            <person name="Hara H."/>
            <person name="Tanase T.-O."/>
            <person name="Nomura Y."/>
            <person name="Togiya S."/>
            <person name="Komai F."/>
            <person name="Hara R."/>
            <person name="Takeuchi K."/>
            <person name="Arita M."/>
            <person name="Imose N."/>
            <person name="Musashino K."/>
            <person name="Yuuki H."/>
            <person name="Oshima A."/>
            <person name="Sasaki N."/>
            <person name="Aotsuka S."/>
            <person name="Yoshikawa Y."/>
            <person name="Matsunawa H."/>
            <person name="Ichihara T."/>
            <person name="Shiohata N."/>
            <person name="Sano S."/>
            <person name="Moriya S."/>
            <person name="Momiyama H."/>
            <person name="Satoh N."/>
            <person name="Takami S."/>
            <person name="Terashima Y."/>
            <person name="Suzuki O."/>
            <person name="Nakagawa S."/>
            <person name="Senoh A."/>
            <person name="Mizoguchi H."/>
            <person name="Goto Y."/>
            <person name="Shimizu F."/>
            <person name="Wakebe H."/>
            <person name="Hishigaki H."/>
            <person name="Watanabe T."/>
            <person name="Sugiyama A."/>
            <person name="Takemoto M."/>
            <person name="Kawakami B."/>
            <person name="Yamazaki M."/>
            <person name="Watanabe K."/>
            <person name="Kumagai A."/>
            <person name="Itakura S."/>
            <person name="Fukuzumi Y."/>
            <person name="Fujimori Y."/>
            <person name="Komiyama M."/>
            <person name="Tashiro H."/>
            <person name="Tanigami A."/>
            <person name="Fujiwara T."/>
            <person name="Ono T."/>
            <person name="Yamada K."/>
            <person name="Fujii Y."/>
            <person name="Ozaki K."/>
            <person name="Hirao M."/>
            <person name="Ohmori Y."/>
            <person name="Kawabata A."/>
            <person name="Hikiji T."/>
            <person name="Kobatake N."/>
            <person name="Inagaki H."/>
            <person name="Ikema Y."/>
            <person name="Okamoto S."/>
            <person name="Okitani R."/>
            <person name="Kawakami T."/>
            <person name="Noguchi S."/>
            <person name="Itoh T."/>
            <person name="Shigeta K."/>
            <person name="Senba T."/>
            <person name="Matsumura K."/>
            <person name="Nakajima Y."/>
            <person name="Mizuno T."/>
            <person name="Morinaga M."/>
            <person name="Sasaki M."/>
            <person name="Togashi T."/>
            <person name="Oyama M."/>
            <person name="Hata H."/>
            <person name="Watanabe M."/>
            <person name="Komatsu T."/>
            <person name="Mizushima-Sugano J."/>
            <person name="Satoh T."/>
            <person name="Shirai Y."/>
            <person name="Takahashi Y."/>
            <person name="Nakagawa K."/>
            <person name="Okumura K."/>
            <person name="Nagase T."/>
            <person name="Nomura N."/>
            <person name="Kikuchi H."/>
            <person name="Masuho Y."/>
            <person name="Yamashita R."/>
            <person name="Nakai K."/>
            <person name="Yada T."/>
            <person name="Nakamura Y."/>
            <person name="Ohara O."/>
            <person name="Isogai T."/>
            <person name="Sugano S."/>
        </authorList>
    </citation>
    <scope>NUCLEOTIDE SEQUENCE [LARGE SCALE MRNA] (ISOFORMS 1; 2 AND 3)</scope>
    <source>
        <tissue>Hair follicle dermal papilla</tissue>
        <tissue>Neuron</tissue>
        <tissue>Testis</tissue>
    </source>
</reference>
<reference key="2">
    <citation type="journal article" date="2007" name="BMC Genomics">
        <title>The full-ORF clone resource of the German cDNA consortium.</title>
        <authorList>
            <person name="Bechtel S."/>
            <person name="Rosenfelder H."/>
            <person name="Duda A."/>
            <person name="Schmidt C.P."/>
            <person name="Ernst U."/>
            <person name="Wellenreuther R."/>
            <person name="Mehrle A."/>
            <person name="Schuster C."/>
            <person name="Bahr A."/>
            <person name="Bloecker H."/>
            <person name="Heubner D."/>
            <person name="Hoerlein A."/>
            <person name="Michel G."/>
            <person name="Wedler H."/>
            <person name="Koehrer K."/>
            <person name="Ottenwaelder B."/>
            <person name="Poustka A."/>
            <person name="Wiemann S."/>
            <person name="Schupp I."/>
        </authorList>
    </citation>
    <scope>NUCLEOTIDE SEQUENCE [LARGE SCALE MRNA] (ISOFORM 4)</scope>
    <source>
        <tissue>Fetal brain</tissue>
    </source>
</reference>
<reference key="3">
    <citation type="journal article" date="2001" name="Nature">
        <title>The DNA sequence and comparative analysis of human chromosome 20.</title>
        <authorList>
            <person name="Deloukas P."/>
            <person name="Matthews L.H."/>
            <person name="Ashurst J.L."/>
            <person name="Burton J."/>
            <person name="Gilbert J.G.R."/>
            <person name="Jones M."/>
            <person name="Stavrides G."/>
            <person name="Almeida J.P."/>
            <person name="Babbage A.K."/>
            <person name="Bagguley C.L."/>
            <person name="Bailey J."/>
            <person name="Barlow K.F."/>
            <person name="Bates K.N."/>
            <person name="Beard L.M."/>
            <person name="Beare D.M."/>
            <person name="Beasley O.P."/>
            <person name="Bird C.P."/>
            <person name="Blakey S.E."/>
            <person name="Bridgeman A.M."/>
            <person name="Brown A.J."/>
            <person name="Buck D."/>
            <person name="Burrill W.D."/>
            <person name="Butler A.P."/>
            <person name="Carder C."/>
            <person name="Carter N.P."/>
            <person name="Chapman J.C."/>
            <person name="Clamp M."/>
            <person name="Clark G."/>
            <person name="Clark L.N."/>
            <person name="Clark S.Y."/>
            <person name="Clee C.M."/>
            <person name="Clegg S."/>
            <person name="Cobley V.E."/>
            <person name="Collier R.E."/>
            <person name="Connor R.E."/>
            <person name="Corby N.R."/>
            <person name="Coulson A."/>
            <person name="Coville G.J."/>
            <person name="Deadman R."/>
            <person name="Dhami P.D."/>
            <person name="Dunn M."/>
            <person name="Ellington A.G."/>
            <person name="Frankland J.A."/>
            <person name="Fraser A."/>
            <person name="French L."/>
            <person name="Garner P."/>
            <person name="Grafham D.V."/>
            <person name="Griffiths C."/>
            <person name="Griffiths M.N.D."/>
            <person name="Gwilliam R."/>
            <person name="Hall R.E."/>
            <person name="Hammond S."/>
            <person name="Harley J.L."/>
            <person name="Heath P.D."/>
            <person name="Ho S."/>
            <person name="Holden J.L."/>
            <person name="Howden P.J."/>
            <person name="Huckle E."/>
            <person name="Hunt A.R."/>
            <person name="Hunt S.E."/>
            <person name="Jekosch K."/>
            <person name="Johnson C.M."/>
            <person name="Johnson D."/>
            <person name="Kay M.P."/>
            <person name="Kimberley A.M."/>
            <person name="King A."/>
            <person name="Knights A."/>
            <person name="Laird G.K."/>
            <person name="Lawlor S."/>
            <person name="Lehvaeslaiho M.H."/>
            <person name="Leversha M.A."/>
            <person name="Lloyd C."/>
            <person name="Lloyd D.M."/>
            <person name="Lovell J.D."/>
            <person name="Marsh V.L."/>
            <person name="Martin S.L."/>
            <person name="McConnachie L.J."/>
            <person name="McLay K."/>
            <person name="McMurray A.A."/>
            <person name="Milne S.A."/>
            <person name="Mistry D."/>
            <person name="Moore M.J.F."/>
            <person name="Mullikin J.C."/>
            <person name="Nickerson T."/>
            <person name="Oliver K."/>
            <person name="Parker A."/>
            <person name="Patel R."/>
            <person name="Pearce T.A.V."/>
            <person name="Peck A.I."/>
            <person name="Phillimore B.J.C.T."/>
            <person name="Prathalingam S.R."/>
            <person name="Plumb R.W."/>
            <person name="Ramsay H."/>
            <person name="Rice C.M."/>
            <person name="Ross M.T."/>
            <person name="Scott C.E."/>
            <person name="Sehra H.K."/>
            <person name="Shownkeen R."/>
            <person name="Sims S."/>
            <person name="Skuce C.D."/>
            <person name="Smith M.L."/>
            <person name="Soderlund C."/>
            <person name="Steward C.A."/>
            <person name="Sulston J.E."/>
            <person name="Swann R.M."/>
            <person name="Sycamore N."/>
            <person name="Taylor R."/>
            <person name="Tee L."/>
            <person name="Thomas D.W."/>
            <person name="Thorpe A."/>
            <person name="Tracey A."/>
            <person name="Tromans A.C."/>
            <person name="Vaudin M."/>
            <person name="Wall M."/>
            <person name="Wallis J.M."/>
            <person name="Whitehead S.L."/>
            <person name="Whittaker P."/>
            <person name="Willey D.L."/>
            <person name="Williams L."/>
            <person name="Williams S.A."/>
            <person name="Wilming L."/>
            <person name="Wray P.W."/>
            <person name="Hubbard T."/>
            <person name="Durbin R.M."/>
            <person name="Bentley D.R."/>
            <person name="Beck S."/>
            <person name="Rogers J."/>
        </authorList>
    </citation>
    <scope>NUCLEOTIDE SEQUENCE [LARGE SCALE GENOMIC DNA]</scope>
</reference>
<reference key="4">
    <citation type="submission" date="2005-09" db="EMBL/GenBank/DDBJ databases">
        <authorList>
            <person name="Mural R.J."/>
            <person name="Istrail S."/>
            <person name="Sutton G.G."/>
            <person name="Florea L."/>
            <person name="Halpern A.L."/>
            <person name="Mobarry C.M."/>
            <person name="Lippert R."/>
            <person name="Walenz B."/>
            <person name="Shatkay H."/>
            <person name="Dew I."/>
            <person name="Miller J.R."/>
            <person name="Flanigan M.J."/>
            <person name="Edwards N.J."/>
            <person name="Bolanos R."/>
            <person name="Fasulo D."/>
            <person name="Halldorsson B.V."/>
            <person name="Hannenhalli S."/>
            <person name="Turner R."/>
            <person name="Yooseph S."/>
            <person name="Lu F."/>
            <person name="Nusskern D.R."/>
            <person name="Shue B.C."/>
            <person name="Zheng X.H."/>
            <person name="Zhong F."/>
            <person name="Delcher A.L."/>
            <person name="Huson D.H."/>
            <person name="Kravitz S.A."/>
            <person name="Mouchard L."/>
            <person name="Reinert K."/>
            <person name="Remington K.A."/>
            <person name="Clark A.G."/>
            <person name="Waterman M.S."/>
            <person name="Eichler E.E."/>
            <person name="Adams M.D."/>
            <person name="Hunkapiller M.W."/>
            <person name="Myers E.W."/>
            <person name="Venter J.C."/>
        </authorList>
    </citation>
    <scope>NUCLEOTIDE SEQUENCE [LARGE SCALE GENOMIC DNA]</scope>
</reference>
<reference key="5">
    <citation type="journal article" date="2004" name="Genome Res.">
        <title>The status, quality, and expansion of the NIH full-length cDNA project: the Mammalian Gene Collection (MGC).</title>
        <authorList>
            <consortium name="The MGC Project Team"/>
        </authorList>
    </citation>
    <scope>NUCLEOTIDE SEQUENCE [LARGE SCALE MRNA] (ISOFORM 1)</scope>
    <source>
        <tissue>Brain</tissue>
    </source>
</reference>
<reference key="6">
    <citation type="submission" date="2005-06" db="EMBL/GenBank/DDBJ databases">
        <authorList>
            <person name="Zhou G."/>
            <person name="Nong W."/>
            <person name="Li H."/>
            <person name="Ke R."/>
            <person name="Shen C."/>
            <person name="Zhong G."/>
            <person name="Zheng Z."/>
            <person name="Liang M."/>
            <person name="Huang B."/>
            <person name="Lin L."/>
            <person name="Yang S."/>
        </authorList>
    </citation>
    <scope>NUCLEOTIDE SEQUENCE [LARGE SCALE MRNA] OF 250-752 (ISOFORM 5)</scope>
</reference>
<reference key="7">
    <citation type="journal article" date="2008" name="Proc. Natl. Acad. Sci. U.S.A.">
        <title>A quantitative atlas of mitotic phosphorylation.</title>
        <authorList>
            <person name="Dephoure N."/>
            <person name="Zhou C."/>
            <person name="Villen J."/>
            <person name="Beausoleil S.A."/>
            <person name="Bakalarski C.E."/>
            <person name="Elledge S.J."/>
            <person name="Gygi S.P."/>
        </authorList>
    </citation>
    <scope>IDENTIFICATION BY MASS SPECTROMETRY [LARGE SCALE ANALYSIS]</scope>
    <source>
        <tissue>Cervix carcinoma</tissue>
    </source>
</reference>
<reference key="8">
    <citation type="journal article" date="2010" name="Sci. Signal.">
        <title>Quantitative phosphoproteomics reveals widespread full phosphorylation site occupancy during mitosis.</title>
        <authorList>
            <person name="Olsen J.V."/>
            <person name="Vermeulen M."/>
            <person name="Santamaria A."/>
            <person name="Kumar C."/>
            <person name="Miller M.L."/>
            <person name="Jensen L.J."/>
            <person name="Gnad F."/>
            <person name="Cox J."/>
            <person name="Jensen T.S."/>
            <person name="Nigg E.A."/>
            <person name="Brunak S."/>
            <person name="Mann M."/>
        </authorList>
    </citation>
    <scope>PHOSPHORYLATION [LARGE SCALE ANALYSIS] AT SER-182</scope>
    <scope>IDENTIFICATION BY MASS SPECTROMETRY [LARGE SCALE ANALYSIS]</scope>
    <source>
        <tissue>Cervix carcinoma</tissue>
    </source>
</reference>
<reference key="9">
    <citation type="journal article" date="2015" name="PLoS Genet.">
        <title>NINL and DZANK1 Co-function in Vesicle Transport and Are Essential for Photoreceptor Development in Zebrafish.</title>
        <authorList>
            <person name="Dona M."/>
            <person name="Bachmann-Gagescu R."/>
            <person name="Texier Y."/>
            <person name="Toedt G."/>
            <person name="Hetterschijt L."/>
            <person name="Tonnaer E.L."/>
            <person name="Peters T.A."/>
            <person name="van Beersum S.E."/>
            <person name="Bergboer J.G."/>
            <person name="Horn N."/>
            <person name="de Vrieze E."/>
            <person name="Slijkerman R.W."/>
            <person name="van Reeuwijk J."/>
            <person name="Flik G."/>
            <person name="Keunen J.E."/>
            <person name="Ueffing M."/>
            <person name="Gibson T.J."/>
            <person name="Roepman R."/>
            <person name="Boldt K."/>
            <person name="Kremer H."/>
            <person name="van Wijk E."/>
        </authorList>
    </citation>
    <scope>INTERACTION WITH NILN</scope>
    <scope>SUBCELLULAR LOCATION</scope>
    <scope>SUBUNIT</scope>
</reference>
<evidence type="ECO:0000250" key="1">
    <source>
        <dbReference type="UniProtKB" id="Q1LXR6"/>
    </source>
</evidence>
<evidence type="ECO:0000250" key="2">
    <source>
        <dbReference type="UniProtKB" id="Q8C008"/>
    </source>
</evidence>
<evidence type="ECO:0000255" key="3"/>
<evidence type="ECO:0000256" key="4">
    <source>
        <dbReference type="SAM" id="MobiDB-lite"/>
    </source>
</evidence>
<evidence type="ECO:0000269" key="5">
    <source>
    </source>
</evidence>
<evidence type="ECO:0000303" key="6">
    <source>
    </source>
</evidence>
<evidence type="ECO:0000303" key="7">
    <source>
    </source>
</evidence>
<evidence type="ECO:0000303" key="8">
    <source ref="6"/>
</evidence>
<evidence type="ECO:0000305" key="9"/>
<evidence type="ECO:0000312" key="10">
    <source>
        <dbReference type="HGNC" id="HGNC:15858"/>
    </source>
</evidence>
<evidence type="ECO:0007744" key="11">
    <source>
    </source>
</evidence>
<protein>
    <recommendedName>
        <fullName>Double zinc ribbon and ankyrin repeat-containing protein 1</fullName>
    </recommendedName>
</protein>
<comment type="function">
    <text evidence="1">Involved in vesicle transport in photoreceptor cells.</text>
</comment>
<comment type="subunit">
    <text evidence="5">Interacts with NINL isoform 2 (PubMed:26485514). Associates with DYNC1H1 and multiple dynein intermediate and light chains as well as actin-binding proteins (PubMed:26485514).</text>
</comment>
<comment type="subcellular location">
    <subcellularLocation>
        <location evidence="5">Cytoplasm</location>
        <location evidence="5">Cytoskeleton</location>
        <location evidence="5">Microtubule organizing center</location>
        <location evidence="5">Centrosome</location>
    </subcellularLocation>
    <subcellularLocation>
        <location evidence="5">Cytoplasm</location>
        <location evidence="5">Cytoskeleton</location>
        <location evidence="5">Cilium basal body</location>
    </subcellularLocation>
    <text evidence="5">Colocalizes with NINL at the base of cilia.</text>
</comment>
<comment type="alternative products">
    <event type="alternative splicing"/>
    <isoform>
        <id>Q9NVP4-1</id>
        <name>1</name>
        <sequence type="displayed"/>
    </isoform>
    <isoform>
        <id>Q9NVP4-2</id>
        <name>2</name>
        <sequence type="described" ref="VSP_042090 VSP_042093 VSP_042095"/>
    </isoform>
    <isoform>
        <id>Q9NVP4-3</id>
        <name>3</name>
        <sequence type="described" ref="VSP_042096 VSP_042097"/>
    </isoform>
    <isoform>
        <id>Q9NVP4-4</id>
        <name>4</name>
        <sequence type="described" ref="VSP_042091 VSP_042092"/>
    </isoform>
    <isoform>
        <id>Q9NVP4-5</id>
        <name>5</name>
        <sequence type="described" ref="VSP_042094"/>
    </isoform>
</comment>
<comment type="sequence caution" evidence="9">
    <conflict type="erroneous initiation">
        <sequence resource="EMBL-CDS" id="BAA91706"/>
    </conflict>
    <text>Truncated N-terminus.</text>
</comment>
<comment type="sequence caution" evidence="9">
    <conflict type="erroneous termination">
        <sequence resource="EMBL-CDS" id="BAB70949"/>
    </conflict>
    <text>Truncated C-terminus.</text>
</comment>
<dbReference type="EMBL" id="AK001462">
    <property type="protein sequence ID" value="BAA91706.1"/>
    <property type="status" value="ALT_INIT"/>
    <property type="molecule type" value="mRNA"/>
</dbReference>
<dbReference type="EMBL" id="AK055544">
    <property type="protein sequence ID" value="BAB70949.1"/>
    <property type="status" value="ALT_SEQ"/>
    <property type="molecule type" value="mRNA"/>
</dbReference>
<dbReference type="EMBL" id="AK131451">
    <property type="protein sequence ID" value="BAD18596.1"/>
    <property type="molecule type" value="mRNA"/>
</dbReference>
<dbReference type="EMBL" id="CR749327">
    <property type="protein sequence ID" value="CAH18182.1"/>
    <property type="molecule type" value="mRNA"/>
</dbReference>
<dbReference type="EMBL" id="AL049646">
    <property type="status" value="NOT_ANNOTATED_CDS"/>
    <property type="molecule type" value="Genomic_DNA"/>
</dbReference>
<dbReference type="EMBL" id="AL121893">
    <property type="status" value="NOT_ANNOTATED_CDS"/>
    <property type="molecule type" value="Genomic_DNA"/>
</dbReference>
<dbReference type="EMBL" id="CH471133">
    <property type="protein sequence ID" value="EAX10244.1"/>
    <property type="molecule type" value="Genomic_DNA"/>
</dbReference>
<dbReference type="EMBL" id="BC144153">
    <property type="protein sequence ID" value="AAI44154.1"/>
    <property type="molecule type" value="mRNA"/>
</dbReference>
<dbReference type="EMBL" id="BC130341">
    <property type="protein sequence ID" value="AAI30342.1"/>
    <property type="molecule type" value="mRNA"/>
</dbReference>
<dbReference type="EMBL" id="DQ104738">
    <property type="protein sequence ID" value="AAZ13595.1"/>
    <property type="molecule type" value="mRNA"/>
</dbReference>
<dbReference type="CCDS" id="CCDS46582.1">
    <molecule id="Q9NVP4-1"/>
</dbReference>
<dbReference type="RefSeq" id="NP_001092877.1">
    <molecule id="Q9NVP4-1"/>
    <property type="nucleotide sequence ID" value="NM_001099407.2"/>
</dbReference>
<dbReference type="RefSeq" id="NP_001354548.1">
    <molecule id="Q9NVP4-4"/>
    <property type="nucleotide sequence ID" value="NM_001367619.1"/>
</dbReference>
<dbReference type="RefSeq" id="XP_005260800.1">
    <property type="nucleotide sequence ID" value="XM_005260743.3"/>
</dbReference>
<dbReference type="RefSeq" id="XP_011527577.1">
    <property type="nucleotide sequence ID" value="XM_011529275.2"/>
</dbReference>
<dbReference type="RefSeq" id="XP_016883409.1">
    <property type="nucleotide sequence ID" value="XM_017027920.1"/>
</dbReference>
<dbReference type="RefSeq" id="XP_047296207.1">
    <molecule id="Q9NVP4-1"/>
    <property type="nucleotide sequence ID" value="XM_047440251.1"/>
</dbReference>
<dbReference type="RefSeq" id="XP_054179574.1">
    <molecule id="Q9NVP4-1"/>
    <property type="nucleotide sequence ID" value="XM_054323599.1"/>
</dbReference>
<dbReference type="RefSeq" id="XP_054179575.1">
    <molecule id="Q9NVP4-1"/>
    <property type="nucleotide sequence ID" value="XM_054323600.1"/>
</dbReference>
<dbReference type="SMR" id="Q9NVP4"/>
<dbReference type="BioGRID" id="120483">
    <property type="interactions" value="15"/>
</dbReference>
<dbReference type="FunCoup" id="Q9NVP4">
    <property type="interactions" value="391"/>
</dbReference>
<dbReference type="IntAct" id="Q9NVP4">
    <property type="interactions" value="5"/>
</dbReference>
<dbReference type="STRING" id="9606.ENSP00000262547"/>
<dbReference type="GlyGen" id="Q9NVP4">
    <property type="glycosylation" value="2 sites, 1 O-linked glycan (1 site)"/>
</dbReference>
<dbReference type="iPTMnet" id="Q9NVP4"/>
<dbReference type="PhosphoSitePlus" id="Q9NVP4"/>
<dbReference type="BioMuta" id="DZANK1"/>
<dbReference type="DMDM" id="363548518"/>
<dbReference type="jPOST" id="Q9NVP4"/>
<dbReference type="MassIVE" id="Q9NVP4"/>
<dbReference type="PaxDb" id="9606-ENSP00000262547"/>
<dbReference type="PeptideAtlas" id="Q9NVP4"/>
<dbReference type="ProteomicsDB" id="82839">
    <molecule id="Q9NVP4-1"/>
</dbReference>
<dbReference type="ProteomicsDB" id="82840">
    <molecule id="Q9NVP4-2"/>
</dbReference>
<dbReference type="ProteomicsDB" id="82841">
    <molecule id="Q9NVP4-3"/>
</dbReference>
<dbReference type="ProteomicsDB" id="82842">
    <molecule id="Q9NVP4-4"/>
</dbReference>
<dbReference type="ProteomicsDB" id="82843">
    <molecule id="Q9NVP4-5"/>
</dbReference>
<dbReference type="Antibodypedia" id="54096">
    <property type="antibodies" value="20 antibodies from 9 providers"/>
</dbReference>
<dbReference type="DNASU" id="55184"/>
<dbReference type="Ensembl" id="ENST00000262547.9">
    <molecule id="Q9NVP4-1"/>
    <property type="protein sequence ID" value="ENSP00000262547.5"/>
    <property type="gene ID" value="ENSG00000089091.17"/>
</dbReference>
<dbReference type="Ensembl" id="ENST00000358866.10">
    <molecule id="Q9NVP4-1"/>
    <property type="protein sequence ID" value="ENSP00000351734.6"/>
    <property type="gene ID" value="ENSG00000089091.17"/>
</dbReference>
<dbReference type="Ensembl" id="ENST00000609267.5">
    <molecule id="Q9NVP4-3"/>
    <property type="protein sequence ID" value="ENSP00000477046.1"/>
    <property type="gene ID" value="ENSG00000089091.17"/>
</dbReference>
<dbReference type="GeneID" id="55184"/>
<dbReference type="KEGG" id="hsa:55184"/>
<dbReference type="UCSC" id="uc002wqq.5">
    <molecule id="Q9NVP4-1"/>
    <property type="organism name" value="human"/>
</dbReference>
<dbReference type="AGR" id="HGNC:15858"/>
<dbReference type="CTD" id="55184"/>
<dbReference type="DisGeNET" id="55184"/>
<dbReference type="GeneCards" id="DZANK1"/>
<dbReference type="HGNC" id="HGNC:15858">
    <property type="gene designation" value="DZANK1"/>
</dbReference>
<dbReference type="HPA" id="ENSG00000089091">
    <property type="expression patterns" value="Low tissue specificity"/>
</dbReference>
<dbReference type="MIM" id="620905">
    <property type="type" value="gene"/>
</dbReference>
<dbReference type="neXtProt" id="NX_Q9NVP4"/>
<dbReference type="OpenTargets" id="ENSG00000089091"/>
<dbReference type="PharmGKB" id="PA25660"/>
<dbReference type="VEuPathDB" id="HostDB:ENSG00000089091"/>
<dbReference type="eggNOG" id="ENOG502QTJR">
    <property type="taxonomic scope" value="Eukaryota"/>
</dbReference>
<dbReference type="GeneTree" id="ENSGT00390000000549"/>
<dbReference type="HOGENOM" id="CLU_024089_0_0_1"/>
<dbReference type="InParanoid" id="Q9NVP4"/>
<dbReference type="OMA" id="GFAHIRS"/>
<dbReference type="OrthoDB" id="10033229at2759"/>
<dbReference type="PAN-GO" id="Q9NVP4">
    <property type="GO annotations" value="1 GO annotation based on evolutionary models"/>
</dbReference>
<dbReference type="PhylomeDB" id="Q9NVP4"/>
<dbReference type="TreeFam" id="TF351270"/>
<dbReference type="PathwayCommons" id="Q9NVP4"/>
<dbReference type="SignaLink" id="Q9NVP4"/>
<dbReference type="BioGRID-ORCS" id="55184">
    <property type="hits" value="10 hits in 1147 CRISPR screens"/>
</dbReference>
<dbReference type="ChiTaRS" id="DZANK1">
    <property type="organism name" value="human"/>
</dbReference>
<dbReference type="GenomeRNAi" id="55184"/>
<dbReference type="Pharos" id="Q9NVP4">
    <property type="development level" value="Tdark"/>
</dbReference>
<dbReference type="PRO" id="PR:Q9NVP4"/>
<dbReference type="Proteomes" id="UP000005640">
    <property type="component" value="Chromosome 20"/>
</dbReference>
<dbReference type="RNAct" id="Q9NVP4">
    <property type="molecule type" value="protein"/>
</dbReference>
<dbReference type="Bgee" id="ENSG00000089091">
    <property type="expression patterns" value="Expressed in sperm and 136 other cell types or tissues"/>
</dbReference>
<dbReference type="ExpressionAtlas" id="Q9NVP4">
    <property type="expression patterns" value="baseline and differential"/>
</dbReference>
<dbReference type="GO" id="GO:0042995">
    <property type="term" value="C:cell projection"/>
    <property type="evidence" value="ECO:0007669"/>
    <property type="project" value="UniProtKB-KW"/>
</dbReference>
<dbReference type="GO" id="GO:0005813">
    <property type="term" value="C:centrosome"/>
    <property type="evidence" value="ECO:0000314"/>
    <property type="project" value="UniProtKB"/>
</dbReference>
<dbReference type="GO" id="GO:0005737">
    <property type="term" value="C:cytoplasm"/>
    <property type="evidence" value="ECO:0007669"/>
    <property type="project" value="UniProtKB-KW"/>
</dbReference>
<dbReference type="GO" id="GO:0008270">
    <property type="term" value="F:zinc ion binding"/>
    <property type="evidence" value="ECO:0007669"/>
    <property type="project" value="UniProtKB-KW"/>
</dbReference>
<dbReference type="GO" id="GO:0042462">
    <property type="term" value="P:eye photoreceptor cell development"/>
    <property type="evidence" value="ECO:0000250"/>
    <property type="project" value="UniProtKB"/>
</dbReference>
<dbReference type="Gene3D" id="1.25.40.20">
    <property type="entry name" value="Ankyrin repeat-containing domain"/>
    <property type="match status" value="1"/>
</dbReference>
<dbReference type="InterPro" id="IPR002110">
    <property type="entry name" value="Ankyrin_rpt"/>
</dbReference>
<dbReference type="InterPro" id="IPR036770">
    <property type="entry name" value="Ankyrin_rpt-contain_sf"/>
</dbReference>
<dbReference type="InterPro" id="IPR052481">
    <property type="entry name" value="DZAN1"/>
</dbReference>
<dbReference type="InterPro" id="IPR025874">
    <property type="entry name" value="DZR"/>
</dbReference>
<dbReference type="InterPro" id="IPR026876">
    <property type="entry name" value="Fn3_assoc_repeat"/>
</dbReference>
<dbReference type="PANTHER" id="PTHR16058">
    <property type="entry name" value="DOUBLE ZINC RIBBON AND ANKYRIN REPEAT-CONTAINING PROTEIN 1"/>
    <property type="match status" value="1"/>
</dbReference>
<dbReference type="PANTHER" id="PTHR16058:SF4">
    <property type="entry name" value="DOUBLE ZINC RIBBON AND ANKYRIN REPEAT-CONTAINING PROTEIN 1"/>
    <property type="match status" value="1"/>
</dbReference>
<dbReference type="Pfam" id="PF12796">
    <property type="entry name" value="Ank_2"/>
    <property type="match status" value="1"/>
</dbReference>
<dbReference type="Pfam" id="PF12773">
    <property type="entry name" value="DZR"/>
    <property type="match status" value="1"/>
</dbReference>
<dbReference type="Pfam" id="PF13287">
    <property type="entry name" value="Fn3_assoc"/>
    <property type="match status" value="1"/>
</dbReference>
<dbReference type="SUPFAM" id="SSF48403">
    <property type="entry name" value="Ankyrin repeat"/>
    <property type="match status" value="1"/>
</dbReference>
<gene>
    <name evidence="10" type="primary">DZANK1</name>
    <name type="synonym">C20orf12</name>
    <name type="synonym">C20orf84</name>
</gene>
<organism>
    <name type="scientific">Homo sapiens</name>
    <name type="common">Human</name>
    <dbReference type="NCBI Taxonomy" id="9606"/>
    <lineage>
        <taxon>Eukaryota</taxon>
        <taxon>Metazoa</taxon>
        <taxon>Chordata</taxon>
        <taxon>Craniata</taxon>
        <taxon>Vertebrata</taxon>
        <taxon>Euteleostomi</taxon>
        <taxon>Mammalia</taxon>
        <taxon>Eutheria</taxon>
        <taxon>Euarchontoglires</taxon>
        <taxon>Primates</taxon>
        <taxon>Haplorrhini</taxon>
        <taxon>Catarrhini</taxon>
        <taxon>Hominidae</taxon>
        <taxon>Homo</taxon>
    </lineage>
</organism>
<keyword id="KW-0025">Alternative splicing</keyword>
<keyword id="KW-0040">ANK repeat</keyword>
<keyword id="KW-0966">Cell projection</keyword>
<keyword id="KW-0963">Cytoplasm</keyword>
<keyword id="KW-0206">Cytoskeleton</keyword>
<keyword id="KW-0479">Metal-binding</keyword>
<keyword id="KW-0597">Phosphoprotein</keyword>
<keyword id="KW-1267">Proteomics identification</keyword>
<keyword id="KW-1185">Reference proteome</keyword>
<keyword id="KW-0677">Repeat</keyword>
<keyword id="KW-0862">Zinc</keyword>
<keyword id="KW-0863">Zinc-finger</keyword>